<proteinExistence type="uncertain"/>
<reference key="1">
    <citation type="journal article" date="1993" name="Yeast">
        <title>Sequencing and functional analysis of a 32,560 bp segment on the left arm of yeast chromosome II. Identification of 26 open reading frames, including the KIP1 and SEC17 genes.</title>
        <authorList>
            <person name="Scherens B."/>
            <person name="el Bakkoury M."/>
            <person name="Vierendeels F."/>
            <person name="Dubois E."/>
            <person name="Messenguy F."/>
        </authorList>
    </citation>
    <scope>NUCLEOTIDE SEQUENCE [GENOMIC DNA]</scope>
    <source>
        <strain>ATCC 204508 / S288c</strain>
    </source>
</reference>
<reference key="2">
    <citation type="journal article" date="1994" name="EMBO J.">
        <title>Complete DNA sequence of yeast chromosome II.</title>
        <authorList>
            <person name="Feldmann H."/>
            <person name="Aigle M."/>
            <person name="Aljinovic G."/>
            <person name="Andre B."/>
            <person name="Baclet M.C."/>
            <person name="Barthe C."/>
            <person name="Baur A."/>
            <person name="Becam A.-M."/>
            <person name="Biteau N."/>
            <person name="Boles E."/>
            <person name="Brandt T."/>
            <person name="Brendel M."/>
            <person name="Brueckner M."/>
            <person name="Bussereau F."/>
            <person name="Christiansen C."/>
            <person name="Contreras R."/>
            <person name="Crouzet M."/>
            <person name="Cziepluch C."/>
            <person name="Demolis N."/>
            <person name="Delaveau T."/>
            <person name="Doignon F."/>
            <person name="Domdey H."/>
            <person name="Duesterhus S."/>
            <person name="Dubois E."/>
            <person name="Dujon B."/>
            <person name="El Bakkoury M."/>
            <person name="Entian K.-D."/>
            <person name="Feuermann M."/>
            <person name="Fiers W."/>
            <person name="Fobo G.M."/>
            <person name="Fritz C."/>
            <person name="Gassenhuber J."/>
            <person name="Glansdorff N."/>
            <person name="Goffeau A."/>
            <person name="Grivell L.A."/>
            <person name="de Haan M."/>
            <person name="Hein C."/>
            <person name="Herbert C.J."/>
            <person name="Hollenberg C.P."/>
            <person name="Holmstroem K."/>
            <person name="Jacq C."/>
            <person name="Jacquet M."/>
            <person name="Jauniaux J.-C."/>
            <person name="Jonniaux J.-L."/>
            <person name="Kallesoee T."/>
            <person name="Kiesau P."/>
            <person name="Kirchrath L."/>
            <person name="Koetter P."/>
            <person name="Korol S."/>
            <person name="Liebl S."/>
            <person name="Logghe M."/>
            <person name="Lohan A.J.E."/>
            <person name="Louis E.J."/>
            <person name="Li Z.Y."/>
            <person name="Maat M.J."/>
            <person name="Mallet L."/>
            <person name="Mannhaupt G."/>
            <person name="Messenguy F."/>
            <person name="Miosga T."/>
            <person name="Molemans F."/>
            <person name="Mueller S."/>
            <person name="Nasr F."/>
            <person name="Obermaier B."/>
            <person name="Perea J."/>
            <person name="Pierard A."/>
            <person name="Piravandi E."/>
            <person name="Pohl F.M."/>
            <person name="Pohl T.M."/>
            <person name="Potier S."/>
            <person name="Proft M."/>
            <person name="Purnelle B."/>
            <person name="Ramezani Rad M."/>
            <person name="Rieger M."/>
            <person name="Rose M."/>
            <person name="Schaaff-Gerstenschlaeger I."/>
            <person name="Scherens B."/>
            <person name="Schwarzlose C."/>
            <person name="Skala J."/>
            <person name="Slonimski P.P."/>
            <person name="Smits P.H.M."/>
            <person name="Souciet J.-L."/>
            <person name="Steensma H.Y."/>
            <person name="Stucka R."/>
            <person name="Urrestarazu L.A."/>
            <person name="van der Aart Q.J.M."/>
            <person name="Van Dyck L."/>
            <person name="Vassarotti A."/>
            <person name="Vetter I."/>
            <person name="Vierendeels F."/>
            <person name="Vissers S."/>
            <person name="Wagner G."/>
            <person name="de Wergifosse P."/>
            <person name="Wolfe K.H."/>
            <person name="Zagulski M."/>
            <person name="Zimmermann F.K."/>
            <person name="Mewes H.-W."/>
            <person name="Kleine K."/>
        </authorList>
    </citation>
    <scope>NUCLEOTIDE SEQUENCE [LARGE SCALE GENOMIC DNA]</scope>
    <source>
        <strain>ATCC 204508 / S288c</strain>
    </source>
</reference>
<reference key="3">
    <citation type="journal article" date="2014" name="G3 (Bethesda)">
        <title>The reference genome sequence of Saccharomyces cerevisiae: Then and now.</title>
        <authorList>
            <person name="Engel S.R."/>
            <person name="Dietrich F.S."/>
            <person name="Fisk D.G."/>
            <person name="Binkley G."/>
            <person name="Balakrishnan R."/>
            <person name="Costanzo M.C."/>
            <person name="Dwight S.S."/>
            <person name="Hitz B.C."/>
            <person name="Karra K."/>
            <person name="Nash R.S."/>
            <person name="Weng S."/>
            <person name="Wong E.D."/>
            <person name="Lloyd P."/>
            <person name="Skrzypek M.S."/>
            <person name="Miyasato S.R."/>
            <person name="Simison M."/>
            <person name="Cherry J.M."/>
        </authorList>
    </citation>
    <scope>GENOME REANNOTATION</scope>
    <source>
        <strain>ATCC 204508 / S288c</strain>
    </source>
</reference>
<reference key="4">
    <citation type="journal article" date="2006" name="Proc. Natl. Acad. Sci. U.S.A.">
        <title>A global topology map of the Saccharomyces cerevisiae membrane proteome.</title>
        <authorList>
            <person name="Kim H."/>
            <person name="Melen K."/>
            <person name="Oesterberg M."/>
            <person name="von Heijne G."/>
        </authorList>
    </citation>
    <scope>TOPOLOGY [LARGE SCALE ANALYSIS]</scope>
    <source>
        <strain>ATCC 208353 / W303-1A</strain>
    </source>
</reference>
<dbReference type="EMBL" id="Z23261">
    <property type="status" value="NOT_ANNOTATED_CDS"/>
    <property type="molecule type" value="Genomic_DNA"/>
</dbReference>
<dbReference type="EMBL" id="Z35823">
    <property type="protein sequence ID" value="CAA84881.1"/>
    <property type="molecule type" value="Genomic_DNA"/>
</dbReference>
<dbReference type="PIR" id="S45797">
    <property type="entry name" value="S45797"/>
</dbReference>
<dbReference type="IntAct" id="P38189">
    <property type="interactions" value="1"/>
</dbReference>
<dbReference type="STRING" id="4932.YBL062W"/>
<dbReference type="PaxDb" id="4932-YBL062W"/>
<dbReference type="EnsemblFungi" id="YBL062W_mRNA">
    <property type="protein sequence ID" value="YBL062W"/>
    <property type="gene ID" value="YBL062W"/>
</dbReference>
<dbReference type="AGR" id="SGD:S000000158"/>
<dbReference type="SGD" id="S000000158">
    <property type="gene designation" value="YBL062W"/>
</dbReference>
<dbReference type="HOGENOM" id="CLU_1983319_0_0_1"/>
<dbReference type="GO" id="GO:0016020">
    <property type="term" value="C:membrane"/>
    <property type="evidence" value="ECO:0007669"/>
    <property type="project" value="UniProtKB-SubCell"/>
</dbReference>
<name>YBG2_YEAST</name>
<gene>
    <name type="ordered locus">YBL062W</name>
    <name type="ORF">YBL0505</name>
</gene>
<keyword id="KW-0472">Membrane</keyword>
<keyword id="KW-0812">Transmembrane</keyword>
<keyword id="KW-1133">Transmembrane helix</keyword>
<protein>
    <recommendedName>
        <fullName>Putative uncharacterized membrane protein YBL062W</fullName>
    </recommendedName>
</protein>
<evidence type="ECO:0000255" key="1"/>
<evidence type="ECO:0000305" key="2"/>
<evidence type="ECO:0000305" key="3">
    <source>
    </source>
</evidence>
<comment type="subcellular location">
    <subcellularLocation>
        <location>Membrane</location>
        <topology>Multi-pass membrane protein</topology>
    </subcellularLocation>
</comment>
<comment type="miscellaneous">
    <text evidence="2">Partially overlaps YBL061C.</text>
</comment>
<comment type="caution">
    <text evidence="3">Product of a dubious gene prediction unlikely to encode a functional protein. Because of that it is not part of the S.cerevisiae S288c complete/reference proteome set.</text>
</comment>
<feature type="chain" id="PRO_0000202453" description="Putative uncharacterized membrane protein YBL062W">
    <location>
        <begin position="1"/>
        <end position="126"/>
    </location>
</feature>
<feature type="topological domain" description="Extracellular" evidence="1">
    <location>
        <begin position="1"/>
        <end position="9"/>
    </location>
</feature>
<feature type="transmembrane region" description="Helical" evidence="1">
    <location>
        <begin position="10"/>
        <end position="30"/>
    </location>
</feature>
<feature type="topological domain" description="Cytoplasmic" evidence="1">
    <location>
        <begin position="31"/>
        <end position="73"/>
    </location>
</feature>
<feature type="transmembrane region" description="Helical" evidence="1">
    <location>
        <begin position="74"/>
        <end position="94"/>
    </location>
</feature>
<feature type="topological domain" description="Extracellular" evidence="1">
    <location>
        <begin position="95"/>
        <end position="126"/>
    </location>
</feature>
<sequence length="126" mass="14415">MCTYIITQSFFFLPCLSFLFFKLVGFFDSVFTAGKSLRIMFELPIFDKLTSCFAAIDCSATSLDIPFAEEELFLMLVSEPVLIPFLFVFEFMLICKPCGSRSRFGFPVKNVSDFEETLEFDPTLLV</sequence>
<accession>P38189</accession>
<organism>
    <name type="scientific">Saccharomyces cerevisiae (strain ATCC 204508 / S288c)</name>
    <name type="common">Baker's yeast</name>
    <dbReference type="NCBI Taxonomy" id="559292"/>
    <lineage>
        <taxon>Eukaryota</taxon>
        <taxon>Fungi</taxon>
        <taxon>Dikarya</taxon>
        <taxon>Ascomycota</taxon>
        <taxon>Saccharomycotina</taxon>
        <taxon>Saccharomycetes</taxon>
        <taxon>Saccharomycetales</taxon>
        <taxon>Saccharomycetaceae</taxon>
        <taxon>Saccharomyces</taxon>
    </lineage>
</organism>